<accession>Q720G2</accession>
<keyword id="KW-0028">Amino-acid biosynthesis</keyword>
<keyword id="KW-0067">ATP-binding</keyword>
<keyword id="KW-0963">Cytoplasm</keyword>
<keyword id="KW-0418">Kinase</keyword>
<keyword id="KW-0547">Nucleotide-binding</keyword>
<keyword id="KW-0641">Proline biosynthesis</keyword>
<keyword id="KW-0808">Transferase</keyword>
<dbReference type="EC" id="2.7.2.11" evidence="1"/>
<dbReference type="EMBL" id="AE017262">
    <property type="protein sequence ID" value="AAT04052.1"/>
    <property type="molecule type" value="Genomic_DNA"/>
</dbReference>
<dbReference type="RefSeq" id="WP_003726720.1">
    <property type="nucleotide sequence ID" value="NC_002973.6"/>
</dbReference>
<dbReference type="SMR" id="Q720G2"/>
<dbReference type="KEGG" id="lmf:LMOf2365_1277"/>
<dbReference type="HOGENOM" id="CLU_025400_0_2_9"/>
<dbReference type="UniPathway" id="UPA00098">
    <property type="reaction ID" value="UER00359"/>
</dbReference>
<dbReference type="GO" id="GO:0005829">
    <property type="term" value="C:cytosol"/>
    <property type="evidence" value="ECO:0007669"/>
    <property type="project" value="TreeGrafter"/>
</dbReference>
<dbReference type="GO" id="GO:0005524">
    <property type="term" value="F:ATP binding"/>
    <property type="evidence" value="ECO:0007669"/>
    <property type="project" value="UniProtKB-KW"/>
</dbReference>
<dbReference type="GO" id="GO:0004349">
    <property type="term" value="F:glutamate 5-kinase activity"/>
    <property type="evidence" value="ECO:0007669"/>
    <property type="project" value="UniProtKB-UniRule"/>
</dbReference>
<dbReference type="GO" id="GO:0055129">
    <property type="term" value="P:L-proline biosynthetic process"/>
    <property type="evidence" value="ECO:0007669"/>
    <property type="project" value="UniProtKB-UniRule"/>
</dbReference>
<dbReference type="CDD" id="cd04242">
    <property type="entry name" value="AAK_G5K_ProB"/>
    <property type="match status" value="1"/>
</dbReference>
<dbReference type="FunFam" id="3.40.1160.10:FF:000036">
    <property type="entry name" value="Glutamate 5-kinase"/>
    <property type="match status" value="1"/>
</dbReference>
<dbReference type="Gene3D" id="3.40.1160.10">
    <property type="entry name" value="Acetylglutamate kinase-like"/>
    <property type="match status" value="1"/>
</dbReference>
<dbReference type="HAMAP" id="MF_00456">
    <property type="entry name" value="ProB"/>
    <property type="match status" value="1"/>
</dbReference>
<dbReference type="InterPro" id="IPR036393">
    <property type="entry name" value="AceGlu_kinase-like_sf"/>
</dbReference>
<dbReference type="InterPro" id="IPR001048">
    <property type="entry name" value="Asp/Glu/Uridylate_kinase"/>
</dbReference>
<dbReference type="InterPro" id="IPR041739">
    <property type="entry name" value="G5K_ProB"/>
</dbReference>
<dbReference type="InterPro" id="IPR001057">
    <property type="entry name" value="Glu/AcGlu_kinase"/>
</dbReference>
<dbReference type="InterPro" id="IPR011529">
    <property type="entry name" value="Glu_5kinase"/>
</dbReference>
<dbReference type="InterPro" id="IPR005715">
    <property type="entry name" value="Glu_5kinase/COase_Synthase"/>
</dbReference>
<dbReference type="InterPro" id="IPR019797">
    <property type="entry name" value="Glutamate_5-kinase_CS"/>
</dbReference>
<dbReference type="NCBIfam" id="TIGR01027">
    <property type="entry name" value="proB"/>
    <property type="match status" value="1"/>
</dbReference>
<dbReference type="PANTHER" id="PTHR43654">
    <property type="entry name" value="GLUTAMATE 5-KINASE"/>
    <property type="match status" value="1"/>
</dbReference>
<dbReference type="PANTHER" id="PTHR43654:SF1">
    <property type="entry name" value="ISOPENTENYL PHOSPHATE KINASE"/>
    <property type="match status" value="1"/>
</dbReference>
<dbReference type="Pfam" id="PF00696">
    <property type="entry name" value="AA_kinase"/>
    <property type="match status" value="1"/>
</dbReference>
<dbReference type="PIRSF" id="PIRSF000729">
    <property type="entry name" value="GK"/>
    <property type="match status" value="1"/>
</dbReference>
<dbReference type="PRINTS" id="PR00474">
    <property type="entry name" value="GLU5KINASE"/>
</dbReference>
<dbReference type="SUPFAM" id="SSF53633">
    <property type="entry name" value="Carbamate kinase-like"/>
    <property type="match status" value="1"/>
</dbReference>
<dbReference type="PROSITE" id="PS00902">
    <property type="entry name" value="GLUTAMATE_5_KINASE"/>
    <property type="match status" value="1"/>
</dbReference>
<protein>
    <recommendedName>
        <fullName evidence="1">Glutamate 5-kinase</fullName>
        <ecNumber evidence="1">2.7.2.11</ecNumber>
    </recommendedName>
    <alternativeName>
        <fullName evidence="1">Gamma-glutamyl kinase</fullName>
        <shortName evidence="1">GK</shortName>
    </alternativeName>
</protein>
<comment type="function">
    <text evidence="1">Catalyzes the transfer of a phosphate group to glutamate to form L-glutamate 5-phosphate.</text>
</comment>
<comment type="catalytic activity">
    <reaction evidence="1">
        <text>L-glutamate + ATP = L-glutamyl 5-phosphate + ADP</text>
        <dbReference type="Rhea" id="RHEA:14877"/>
        <dbReference type="ChEBI" id="CHEBI:29985"/>
        <dbReference type="ChEBI" id="CHEBI:30616"/>
        <dbReference type="ChEBI" id="CHEBI:58274"/>
        <dbReference type="ChEBI" id="CHEBI:456216"/>
        <dbReference type="EC" id="2.7.2.11"/>
    </reaction>
</comment>
<comment type="pathway">
    <text evidence="1">Amino-acid biosynthesis; L-proline biosynthesis; L-glutamate 5-semialdehyde from L-glutamate: step 1/2.</text>
</comment>
<comment type="subcellular location">
    <subcellularLocation>
        <location evidence="1">Cytoplasm</location>
    </subcellularLocation>
</comment>
<comment type="similarity">
    <text evidence="1">Belongs to the glutamate 5-kinase family.</text>
</comment>
<gene>
    <name evidence="1" type="primary">proB</name>
    <name type="ordered locus">LMOf2365_1277</name>
</gene>
<organism>
    <name type="scientific">Listeria monocytogenes serotype 4b (strain F2365)</name>
    <dbReference type="NCBI Taxonomy" id="265669"/>
    <lineage>
        <taxon>Bacteria</taxon>
        <taxon>Bacillati</taxon>
        <taxon>Bacillota</taxon>
        <taxon>Bacilli</taxon>
        <taxon>Bacillales</taxon>
        <taxon>Listeriaceae</taxon>
        <taxon>Listeria</taxon>
    </lineage>
</organism>
<reference key="1">
    <citation type="journal article" date="2004" name="Nucleic Acids Res.">
        <title>Whole genome comparisons of serotype 4b and 1/2a strains of the food-borne pathogen Listeria monocytogenes reveal new insights into the core genome components of this species.</title>
        <authorList>
            <person name="Nelson K.E."/>
            <person name="Fouts D.E."/>
            <person name="Mongodin E.F."/>
            <person name="Ravel J."/>
            <person name="DeBoy R.T."/>
            <person name="Kolonay J.F."/>
            <person name="Rasko D.A."/>
            <person name="Angiuoli S.V."/>
            <person name="Gill S.R."/>
            <person name="Paulsen I.T."/>
            <person name="Peterson J.D."/>
            <person name="White O."/>
            <person name="Nelson W.C."/>
            <person name="Nierman W.C."/>
            <person name="Beanan M.J."/>
            <person name="Brinkac L.M."/>
            <person name="Daugherty S.C."/>
            <person name="Dodson R.J."/>
            <person name="Durkin A.S."/>
            <person name="Madupu R."/>
            <person name="Haft D.H."/>
            <person name="Selengut J."/>
            <person name="Van Aken S.E."/>
            <person name="Khouri H.M."/>
            <person name="Fedorova N."/>
            <person name="Forberger H.A."/>
            <person name="Tran B."/>
            <person name="Kathariou S."/>
            <person name="Wonderling L.D."/>
            <person name="Uhlich G.A."/>
            <person name="Bayles D.O."/>
            <person name="Luchansky J.B."/>
            <person name="Fraser C.M."/>
        </authorList>
    </citation>
    <scope>NUCLEOTIDE SEQUENCE [LARGE SCALE GENOMIC DNA]</scope>
    <source>
        <strain>F2365</strain>
    </source>
</reference>
<evidence type="ECO:0000255" key="1">
    <source>
        <dbReference type="HAMAP-Rule" id="MF_00456"/>
    </source>
</evidence>
<feature type="chain" id="PRO_0000109688" description="Glutamate 5-kinase">
    <location>
        <begin position="1"/>
        <end position="276"/>
    </location>
</feature>
<feature type="binding site" evidence="1">
    <location>
        <position position="14"/>
    </location>
    <ligand>
        <name>ATP</name>
        <dbReference type="ChEBI" id="CHEBI:30616"/>
    </ligand>
</feature>
<feature type="binding site" evidence="1">
    <location>
        <position position="54"/>
    </location>
    <ligand>
        <name>substrate</name>
    </ligand>
</feature>
<feature type="binding site" evidence="1">
    <location>
        <position position="141"/>
    </location>
    <ligand>
        <name>substrate</name>
    </ligand>
</feature>
<feature type="binding site" evidence="1">
    <location>
        <position position="157"/>
    </location>
    <ligand>
        <name>substrate</name>
    </ligand>
</feature>
<feature type="binding site" evidence="1">
    <location>
        <begin position="177"/>
        <end position="178"/>
    </location>
    <ligand>
        <name>ATP</name>
        <dbReference type="ChEBI" id="CHEBI:30616"/>
    </ligand>
</feature>
<feature type="binding site" evidence="1">
    <location>
        <begin position="219"/>
        <end position="225"/>
    </location>
    <ligand>
        <name>ATP</name>
        <dbReference type="ChEBI" id="CHEBI:30616"/>
    </ligand>
</feature>
<sequence length="276" mass="30032">MRESLKNSKRLVIKVGTSTLMYGNGHINLRTIEKLAMVLSDLRNEGKEVILVSSGAIGVGCHKLQLSVRPTSIPDLQAVASVGQSELMHIYSKFFGEYGQVVGQVLLTRDVTDFPISRENVMNTLDSLLSRGIIPIVNENDTVAVEELEHVTKYGDNDLLSAIVAKLVQADLLIMLSDIDGFYGSNPATDPEAVMFSEINQITPEIEALAGGRGSKFGTGGMLTKLSAASYCMDSNQKMILTNGKNPTVIFNIMQGEQIGTLFASKKEELSHDRTH</sequence>
<name>PROB_LISMF</name>
<proteinExistence type="inferred from homology"/>